<sequence>MQQYLDLMRHVLEHGDRKTDRTGTGTVSVFGWQMRFRLAEGFPLLTTKKLHTRSIIHELLWFIRGDTNIRYLKDHGVSIWDEWADENGDLGPVYGKQWRRWETADGRSVDQLAQLIDGIKRNPDSRRHIVSAWNPGEVGSMALPPCHALFQFYVAGGRLSCQLYQRSADIFLGVPFNIASYALLTMMVAQVCDLEPGDFVWTGGDCHLYLNHLQQAEEQLQRTPYPLPRMILNPEVRDLFAFRFEDFTLEGYTAHPHIKAPVAV</sequence>
<proteinExistence type="inferred from homology"/>
<protein>
    <recommendedName>
        <fullName evidence="1">Thymidylate synthase</fullName>
        <shortName evidence="1">TS</shortName>
        <shortName evidence="1">TSase</shortName>
        <ecNumber evidence="1">2.1.1.45</ecNumber>
    </recommendedName>
</protein>
<comment type="function">
    <text evidence="1">Catalyzes the reductive methylation of 2'-deoxyuridine-5'-monophosphate (dUMP) to 2'-deoxythymidine-5'-monophosphate (dTMP) while utilizing 5,10-methylenetetrahydrofolate (mTHF) as the methyl donor and reductant in the reaction, yielding dihydrofolate (DHF) as a by-product. This enzymatic reaction provides an intracellular de novo source of dTMP, an essential precursor for DNA biosynthesis.</text>
</comment>
<comment type="catalytic activity">
    <reaction evidence="1">
        <text>dUMP + (6R)-5,10-methylene-5,6,7,8-tetrahydrofolate = 7,8-dihydrofolate + dTMP</text>
        <dbReference type="Rhea" id="RHEA:12104"/>
        <dbReference type="ChEBI" id="CHEBI:15636"/>
        <dbReference type="ChEBI" id="CHEBI:57451"/>
        <dbReference type="ChEBI" id="CHEBI:63528"/>
        <dbReference type="ChEBI" id="CHEBI:246422"/>
        <dbReference type="EC" id="2.1.1.45"/>
    </reaction>
</comment>
<comment type="pathway">
    <text evidence="1">Pyrimidine metabolism; dTTP biosynthesis.</text>
</comment>
<comment type="subunit">
    <text evidence="1">Homodimer.</text>
</comment>
<comment type="subcellular location">
    <subcellularLocation>
        <location evidence="1">Cytoplasm</location>
    </subcellularLocation>
</comment>
<comment type="similarity">
    <text evidence="1">Belongs to the thymidylate synthase family. Bacterial-type ThyA subfamily.</text>
</comment>
<organism>
    <name type="scientific">Azoarcus sp. (strain BH72)</name>
    <dbReference type="NCBI Taxonomy" id="418699"/>
    <lineage>
        <taxon>Bacteria</taxon>
        <taxon>Pseudomonadati</taxon>
        <taxon>Pseudomonadota</taxon>
        <taxon>Betaproteobacteria</taxon>
        <taxon>Rhodocyclales</taxon>
        <taxon>Zoogloeaceae</taxon>
        <taxon>Azoarcus</taxon>
    </lineage>
</organism>
<gene>
    <name evidence="1" type="primary">thyA</name>
    <name type="ordered locus">azo3197</name>
</gene>
<name>TYSY_AZOSB</name>
<reference key="1">
    <citation type="journal article" date="2006" name="Nat. Biotechnol.">
        <title>Complete genome of the mutualistic, N2-fixing grass endophyte Azoarcus sp. strain BH72.</title>
        <authorList>
            <person name="Krause A."/>
            <person name="Ramakumar A."/>
            <person name="Bartels D."/>
            <person name="Battistoni F."/>
            <person name="Bekel T."/>
            <person name="Boch J."/>
            <person name="Boehm M."/>
            <person name="Friedrich F."/>
            <person name="Hurek T."/>
            <person name="Krause L."/>
            <person name="Linke B."/>
            <person name="McHardy A.C."/>
            <person name="Sarkar A."/>
            <person name="Schneiker S."/>
            <person name="Syed A.A."/>
            <person name="Thauer R."/>
            <person name="Vorhoelter F.-J."/>
            <person name="Weidner S."/>
            <person name="Puehler A."/>
            <person name="Reinhold-Hurek B."/>
            <person name="Kaiser O."/>
            <person name="Goesmann A."/>
        </authorList>
    </citation>
    <scope>NUCLEOTIDE SEQUENCE [LARGE SCALE GENOMIC DNA]</scope>
    <source>
        <strain>BH72</strain>
    </source>
</reference>
<evidence type="ECO:0000255" key="1">
    <source>
        <dbReference type="HAMAP-Rule" id="MF_00008"/>
    </source>
</evidence>
<dbReference type="EC" id="2.1.1.45" evidence="1"/>
<dbReference type="EMBL" id="AM406670">
    <property type="protein sequence ID" value="CAL95813.1"/>
    <property type="molecule type" value="Genomic_DNA"/>
</dbReference>
<dbReference type="RefSeq" id="WP_011766921.1">
    <property type="nucleotide sequence ID" value="NC_008702.1"/>
</dbReference>
<dbReference type="SMR" id="A1KAF7"/>
<dbReference type="STRING" id="62928.azo3197"/>
<dbReference type="KEGG" id="azo:azo3197"/>
<dbReference type="eggNOG" id="COG0207">
    <property type="taxonomic scope" value="Bacteria"/>
</dbReference>
<dbReference type="HOGENOM" id="CLU_021669_0_0_4"/>
<dbReference type="UniPathway" id="UPA00575"/>
<dbReference type="Proteomes" id="UP000002588">
    <property type="component" value="Chromosome"/>
</dbReference>
<dbReference type="GO" id="GO:0005829">
    <property type="term" value="C:cytosol"/>
    <property type="evidence" value="ECO:0007669"/>
    <property type="project" value="TreeGrafter"/>
</dbReference>
<dbReference type="GO" id="GO:0004799">
    <property type="term" value="F:thymidylate synthase activity"/>
    <property type="evidence" value="ECO:0007669"/>
    <property type="project" value="UniProtKB-UniRule"/>
</dbReference>
<dbReference type="GO" id="GO:0006231">
    <property type="term" value="P:dTMP biosynthetic process"/>
    <property type="evidence" value="ECO:0007669"/>
    <property type="project" value="UniProtKB-UniRule"/>
</dbReference>
<dbReference type="GO" id="GO:0006235">
    <property type="term" value="P:dTTP biosynthetic process"/>
    <property type="evidence" value="ECO:0007669"/>
    <property type="project" value="UniProtKB-UniRule"/>
</dbReference>
<dbReference type="GO" id="GO:0032259">
    <property type="term" value="P:methylation"/>
    <property type="evidence" value="ECO:0007669"/>
    <property type="project" value="UniProtKB-KW"/>
</dbReference>
<dbReference type="CDD" id="cd00351">
    <property type="entry name" value="TS_Pyrimidine_HMase"/>
    <property type="match status" value="1"/>
</dbReference>
<dbReference type="FunFam" id="3.30.572.10:FF:000001">
    <property type="entry name" value="Thymidylate synthase"/>
    <property type="match status" value="1"/>
</dbReference>
<dbReference type="Gene3D" id="3.30.572.10">
    <property type="entry name" value="Thymidylate synthase/dCMP hydroxymethylase domain"/>
    <property type="match status" value="1"/>
</dbReference>
<dbReference type="HAMAP" id="MF_00008">
    <property type="entry name" value="Thymidy_synth_bact"/>
    <property type="match status" value="1"/>
</dbReference>
<dbReference type="InterPro" id="IPR045097">
    <property type="entry name" value="Thymidate_synth/dCMP_Mease"/>
</dbReference>
<dbReference type="InterPro" id="IPR023451">
    <property type="entry name" value="Thymidate_synth/dCMP_Mease_dom"/>
</dbReference>
<dbReference type="InterPro" id="IPR036926">
    <property type="entry name" value="Thymidate_synth/dCMP_Mease_sf"/>
</dbReference>
<dbReference type="InterPro" id="IPR000398">
    <property type="entry name" value="Thymidylate_synthase"/>
</dbReference>
<dbReference type="InterPro" id="IPR020940">
    <property type="entry name" value="Thymidylate_synthase_AS"/>
</dbReference>
<dbReference type="NCBIfam" id="NF002497">
    <property type="entry name" value="PRK01827.1-3"/>
    <property type="match status" value="1"/>
</dbReference>
<dbReference type="NCBIfam" id="NF002499">
    <property type="entry name" value="PRK01827.1-5"/>
    <property type="match status" value="1"/>
</dbReference>
<dbReference type="NCBIfam" id="TIGR03284">
    <property type="entry name" value="thym_sym"/>
    <property type="match status" value="2"/>
</dbReference>
<dbReference type="PANTHER" id="PTHR11548:SF9">
    <property type="entry name" value="THYMIDYLATE SYNTHASE"/>
    <property type="match status" value="1"/>
</dbReference>
<dbReference type="PANTHER" id="PTHR11548">
    <property type="entry name" value="THYMIDYLATE SYNTHASE 1"/>
    <property type="match status" value="1"/>
</dbReference>
<dbReference type="Pfam" id="PF00303">
    <property type="entry name" value="Thymidylat_synt"/>
    <property type="match status" value="1"/>
</dbReference>
<dbReference type="PRINTS" id="PR00108">
    <property type="entry name" value="THYMDSNTHASE"/>
</dbReference>
<dbReference type="SUPFAM" id="SSF55831">
    <property type="entry name" value="Thymidylate synthase/dCMP hydroxymethylase"/>
    <property type="match status" value="1"/>
</dbReference>
<dbReference type="PROSITE" id="PS00091">
    <property type="entry name" value="THYMIDYLATE_SYNTHASE"/>
    <property type="match status" value="1"/>
</dbReference>
<feature type="chain" id="PRO_1000000574" description="Thymidylate synthase">
    <location>
        <begin position="1"/>
        <end position="264"/>
    </location>
</feature>
<feature type="active site" description="Nucleophile" evidence="1">
    <location>
        <position position="146"/>
    </location>
</feature>
<feature type="binding site" description="in other chain" evidence="1">
    <location>
        <position position="21"/>
    </location>
    <ligand>
        <name>dUMP</name>
        <dbReference type="ChEBI" id="CHEBI:246422"/>
        <note>ligand shared between dimeric partners</note>
    </ligand>
</feature>
<feature type="binding site" evidence="1">
    <location>
        <position position="51"/>
    </location>
    <ligand>
        <name>(6R)-5,10-methylene-5,6,7,8-tetrahydrofolate</name>
        <dbReference type="ChEBI" id="CHEBI:15636"/>
    </ligand>
</feature>
<feature type="binding site" evidence="1">
    <location>
        <begin position="126"/>
        <end position="127"/>
    </location>
    <ligand>
        <name>dUMP</name>
        <dbReference type="ChEBI" id="CHEBI:246422"/>
        <note>ligand shared between dimeric partners</note>
    </ligand>
</feature>
<feature type="binding site" description="in other chain" evidence="1">
    <location>
        <begin position="166"/>
        <end position="169"/>
    </location>
    <ligand>
        <name>dUMP</name>
        <dbReference type="ChEBI" id="CHEBI:246422"/>
        <note>ligand shared between dimeric partners</note>
    </ligand>
</feature>
<feature type="binding site" evidence="1">
    <location>
        <position position="169"/>
    </location>
    <ligand>
        <name>(6R)-5,10-methylene-5,6,7,8-tetrahydrofolate</name>
        <dbReference type="ChEBI" id="CHEBI:15636"/>
    </ligand>
</feature>
<feature type="binding site" description="in other chain" evidence="1">
    <location>
        <position position="177"/>
    </location>
    <ligand>
        <name>dUMP</name>
        <dbReference type="ChEBI" id="CHEBI:246422"/>
        <note>ligand shared between dimeric partners</note>
    </ligand>
</feature>
<feature type="binding site" description="in other chain" evidence="1">
    <location>
        <begin position="207"/>
        <end position="209"/>
    </location>
    <ligand>
        <name>dUMP</name>
        <dbReference type="ChEBI" id="CHEBI:246422"/>
        <note>ligand shared between dimeric partners</note>
    </ligand>
</feature>
<feature type="binding site" evidence="1">
    <location>
        <position position="263"/>
    </location>
    <ligand>
        <name>(6R)-5,10-methylene-5,6,7,8-tetrahydrofolate</name>
        <dbReference type="ChEBI" id="CHEBI:15636"/>
    </ligand>
</feature>
<keyword id="KW-0963">Cytoplasm</keyword>
<keyword id="KW-0489">Methyltransferase</keyword>
<keyword id="KW-0545">Nucleotide biosynthesis</keyword>
<keyword id="KW-1185">Reference proteome</keyword>
<keyword id="KW-0808">Transferase</keyword>
<accession>A1KAF7</accession>